<proteinExistence type="inferred from homology"/>
<reference key="1">
    <citation type="journal article" date="2009" name="Appl. Environ. Microbiol.">
        <title>Genome analysis of the meat starter culture bacterium Staphylococcus carnosus TM300.</title>
        <authorList>
            <person name="Rosenstein R."/>
            <person name="Nerz C."/>
            <person name="Biswas L."/>
            <person name="Resch A."/>
            <person name="Raddatz G."/>
            <person name="Schuster S.C."/>
            <person name="Goetz F."/>
        </authorList>
    </citation>
    <scope>NUCLEOTIDE SEQUENCE [LARGE SCALE GENOMIC DNA]</scope>
    <source>
        <strain>TM300</strain>
    </source>
</reference>
<protein>
    <recommendedName>
        <fullName evidence="1">ATP synthase gamma chain</fullName>
    </recommendedName>
    <alternativeName>
        <fullName evidence="1">ATP synthase F1 sector gamma subunit</fullName>
    </alternativeName>
    <alternativeName>
        <fullName evidence="1">F-ATPase gamma subunit</fullName>
    </alternativeName>
</protein>
<organism>
    <name type="scientific">Staphylococcus carnosus (strain TM300)</name>
    <dbReference type="NCBI Taxonomy" id="396513"/>
    <lineage>
        <taxon>Bacteria</taxon>
        <taxon>Bacillati</taxon>
        <taxon>Bacillota</taxon>
        <taxon>Bacilli</taxon>
        <taxon>Bacillales</taxon>
        <taxon>Staphylococcaceae</taxon>
        <taxon>Staphylococcus</taxon>
    </lineage>
</organism>
<name>ATPG_STACT</name>
<evidence type="ECO:0000255" key="1">
    <source>
        <dbReference type="HAMAP-Rule" id="MF_00815"/>
    </source>
</evidence>
<gene>
    <name evidence="1" type="primary">atpG</name>
    <name type="ordered locus">Sca_1607</name>
</gene>
<dbReference type="EMBL" id="AM295250">
    <property type="protein sequence ID" value="CAL28513.1"/>
    <property type="molecule type" value="Genomic_DNA"/>
</dbReference>
<dbReference type="RefSeq" id="WP_015900853.1">
    <property type="nucleotide sequence ID" value="NC_012121.1"/>
</dbReference>
<dbReference type="SMR" id="B9DME4"/>
<dbReference type="GeneID" id="93794061"/>
<dbReference type="KEGG" id="sca:SCA_1607"/>
<dbReference type="eggNOG" id="COG0224">
    <property type="taxonomic scope" value="Bacteria"/>
</dbReference>
<dbReference type="HOGENOM" id="CLU_050669_0_1_9"/>
<dbReference type="OrthoDB" id="9812769at2"/>
<dbReference type="BioCyc" id="SCAR396513:SCA_RS08165-MONOMER"/>
<dbReference type="Proteomes" id="UP000000444">
    <property type="component" value="Chromosome"/>
</dbReference>
<dbReference type="GO" id="GO:0005886">
    <property type="term" value="C:plasma membrane"/>
    <property type="evidence" value="ECO:0007669"/>
    <property type="project" value="UniProtKB-SubCell"/>
</dbReference>
<dbReference type="GO" id="GO:0045259">
    <property type="term" value="C:proton-transporting ATP synthase complex"/>
    <property type="evidence" value="ECO:0007669"/>
    <property type="project" value="UniProtKB-KW"/>
</dbReference>
<dbReference type="GO" id="GO:0005524">
    <property type="term" value="F:ATP binding"/>
    <property type="evidence" value="ECO:0007669"/>
    <property type="project" value="UniProtKB-UniRule"/>
</dbReference>
<dbReference type="GO" id="GO:0046933">
    <property type="term" value="F:proton-transporting ATP synthase activity, rotational mechanism"/>
    <property type="evidence" value="ECO:0007669"/>
    <property type="project" value="UniProtKB-UniRule"/>
</dbReference>
<dbReference type="GO" id="GO:0042777">
    <property type="term" value="P:proton motive force-driven plasma membrane ATP synthesis"/>
    <property type="evidence" value="ECO:0007669"/>
    <property type="project" value="UniProtKB-UniRule"/>
</dbReference>
<dbReference type="CDD" id="cd12151">
    <property type="entry name" value="F1-ATPase_gamma"/>
    <property type="match status" value="1"/>
</dbReference>
<dbReference type="FunFam" id="1.10.287.80:FF:000019">
    <property type="entry name" value="ATP synthase gamma chain"/>
    <property type="match status" value="1"/>
</dbReference>
<dbReference type="FunFam" id="3.40.1380.10:FF:000002">
    <property type="entry name" value="ATP synthase gamma chain"/>
    <property type="match status" value="1"/>
</dbReference>
<dbReference type="Gene3D" id="3.40.1380.10">
    <property type="match status" value="1"/>
</dbReference>
<dbReference type="Gene3D" id="1.10.287.80">
    <property type="entry name" value="ATP synthase, gamma subunit, helix hairpin domain"/>
    <property type="match status" value="1"/>
</dbReference>
<dbReference type="HAMAP" id="MF_00815">
    <property type="entry name" value="ATP_synth_gamma_bact"/>
    <property type="match status" value="1"/>
</dbReference>
<dbReference type="InterPro" id="IPR035968">
    <property type="entry name" value="ATP_synth_F1_ATPase_gsu"/>
</dbReference>
<dbReference type="InterPro" id="IPR000131">
    <property type="entry name" value="ATP_synth_F1_gsu"/>
</dbReference>
<dbReference type="NCBIfam" id="TIGR01146">
    <property type="entry name" value="ATPsyn_F1gamma"/>
    <property type="match status" value="1"/>
</dbReference>
<dbReference type="PANTHER" id="PTHR11693">
    <property type="entry name" value="ATP SYNTHASE GAMMA CHAIN"/>
    <property type="match status" value="1"/>
</dbReference>
<dbReference type="PANTHER" id="PTHR11693:SF22">
    <property type="entry name" value="ATP SYNTHASE SUBUNIT GAMMA, MITOCHONDRIAL"/>
    <property type="match status" value="1"/>
</dbReference>
<dbReference type="Pfam" id="PF00231">
    <property type="entry name" value="ATP-synt"/>
    <property type="match status" value="1"/>
</dbReference>
<dbReference type="PRINTS" id="PR00126">
    <property type="entry name" value="ATPASEGAMMA"/>
</dbReference>
<dbReference type="SUPFAM" id="SSF52943">
    <property type="entry name" value="ATP synthase (F1-ATPase), gamma subunit"/>
    <property type="match status" value="1"/>
</dbReference>
<accession>B9DME4</accession>
<sequence>MGSLKDIDSRIKSTKKMNQITKAMNMVASSKLNKAQRNSNQFKPYMDKLQNAITAVAGQTTSNHPMLVERPVKKRGYLVISSDRGLAGAYNANILRKVLQDIQERGENPSDYKLLVLGKVGIDFFKNRSIEVEYALPDVPDQPTFKSIEPVTKKAIDLYENGDIDELNIYYNKFINVLESKPTAKRVLPLSKEDASSGLGQMSSYEFEPDKESILNIILPQYVEGLIYGTILNAKASEHAMRMTAMKNASDNASDLIDDLSLQYNRARQAAITQQITEIVGGATALE</sequence>
<keyword id="KW-0066">ATP synthesis</keyword>
<keyword id="KW-1003">Cell membrane</keyword>
<keyword id="KW-0139">CF(1)</keyword>
<keyword id="KW-0375">Hydrogen ion transport</keyword>
<keyword id="KW-0406">Ion transport</keyword>
<keyword id="KW-0472">Membrane</keyword>
<keyword id="KW-1185">Reference proteome</keyword>
<keyword id="KW-0813">Transport</keyword>
<comment type="function">
    <text evidence="1">Produces ATP from ADP in the presence of a proton gradient across the membrane. The gamma chain is believed to be important in regulating ATPase activity and the flow of protons through the CF(0) complex.</text>
</comment>
<comment type="subunit">
    <text evidence="1">F-type ATPases have 2 components, CF(1) - the catalytic core - and CF(0) - the membrane proton channel. CF(1) has five subunits: alpha(3), beta(3), gamma(1), delta(1), epsilon(1). CF(0) has three main subunits: a, b and c.</text>
</comment>
<comment type="subcellular location">
    <subcellularLocation>
        <location evidence="1">Cell membrane</location>
        <topology evidence="1">Peripheral membrane protein</topology>
    </subcellularLocation>
</comment>
<comment type="similarity">
    <text evidence="1">Belongs to the ATPase gamma chain family.</text>
</comment>
<feature type="chain" id="PRO_1000148637" description="ATP synthase gamma chain">
    <location>
        <begin position="1"/>
        <end position="287"/>
    </location>
</feature>